<comment type="function">
    <text evidence="1 5 6">Deubiquitinase involved in innate antiviral immunity by mediating deubiquitination of CGAS and RIGI (PubMed:31534008, PubMed:32027733). Negatively regulates RIGI by mediating 'Lys-63'-linked deubiquitination of RIGI, inhibiting type I interferon signaling (PubMed:32027733). Also regulates 'Lys-63'-linked ubiquitination level of MDA5/IFIH1 (PubMed:32027733). Acts as a positive regulator of the cGAS-STING pathway by catalyzing 'Lys-48'-linked deubiquitination of CGAS, thereby promoting its stabilization (PubMed:31534008). Can reduce the levels of BCL2L11/BIM ubiquitination and stabilize BCL2L11 in response to the RAF-MAPK-degradation signal (By similarity). By acting on BCL2L11 levels, may counteract the anti-apoptotic effects of MAPK activity (By similarity).</text>
</comment>
<comment type="catalytic activity">
    <reaction evidence="5 6">
        <text>Thiol-dependent hydrolysis of ester, thioester, amide, peptide and isopeptide bonds formed by the C-terminal Gly of ubiquitin (a 76-residue protein attached to proteins as an intracellular targeting signal).</text>
        <dbReference type="EC" id="3.4.19.12"/>
    </reaction>
</comment>
<comment type="subunit">
    <text evidence="1">Interacts with phosphorylated BCL2L11 isoform BIMEL; this interaction leads to BCL2L11 deubiquitination and stabilization.</text>
</comment>
<comment type="subcellular location">
    <subcellularLocation>
        <location evidence="1">Cytoplasm</location>
        <location evidence="1">Cytosol</location>
    </subcellularLocation>
    <subcellularLocation>
        <location evidence="1">Nucleus</location>
    </subcellularLocation>
</comment>
<comment type="disease" evidence="4">
    <disease id="DI-04816">
        <name>Intellectual developmental disorder, X-linked 105</name>
        <acronym>XLID105</acronym>
        <description>A form of intellectual disability, a disorder characterized by significantly below average general intellectual functioning associated with impairments in adaptive behavior and manifested during the developmental period. Intellectual deficiency is the only primary symptom of non-syndromic X-linked forms, while syndromic forms present with associated physical, neurological and/or psychiatric manifestations.</description>
        <dbReference type="MIM" id="300984"/>
    </disease>
    <text>The disease is caused by variants affecting the gene represented in this entry.</text>
</comment>
<comment type="similarity">
    <text evidence="8">Belongs to the peptidase C19 family.</text>
</comment>
<comment type="caution">
    <text evidence="8">Although strongly related to USP22, which deubiquitinates histones, lacks the N-terminal UBP-type zinc finger, suggesting it does not have the ability to deubiquitinate histones.</text>
</comment>
<name>UBP27_HUMAN</name>
<gene>
    <name evidence="7 11" type="primary">USP27X</name>
    <name type="synonym">USP22L</name>
    <name type="synonym">USP27</name>
</gene>
<protein>
    <recommendedName>
        <fullName>Ubiquitin carboxyl-terminal hydrolase 27</fullName>
        <ecNumber evidence="5 6">3.4.19.12</ecNumber>
    </recommendedName>
    <alternativeName>
        <fullName>Deubiquitinating enzyme 27</fullName>
    </alternativeName>
    <alternativeName>
        <fullName>Ubiquitin carboxyl-terminal hydrolase 22-like</fullName>
    </alternativeName>
    <alternativeName>
        <fullName>Ubiquitin thioesterase 27</fullName>
    </alternativeName>
    <alternativeName>
        <fullName>Ubiquitin-specific-processing protease 27</fullName>
    </alternativeName>
    <alternativeName>
        <fullName>X-linked ubiquitin carboxyl-terminal hydrolase 27</fullName>
    </alternativeName>
</protein>
<accession>A6NNY8</accession>
<proteinExistence type="evidence at protein level"/>
<feature type="chain" id="PRO_0000306334" description="Ubiquitin carboxyl-terminal hydrolase 27">
    <location>
        <begin position="1"/>
        <end position="438"/>
    </location>
</feature>
<feature type="domain" description="USP">
    <location>
        <begin position="78"/>
        <end position="421"/>
    </location>
</feature>
<feature type="active site" description="Nucleophile" evidence="2 3 9 10">
    <location>
        <position position="87"/>
    </location>
</feature>
<feature type="active site" description="Proton acceptor" evidence="2 3 10">
    <location>
        <position position="380"/>
    </location>
</feature>
<feature type="sequence variant" id="VAR_077830" description="In XLID105; dbSNP:rs886038211." evidence="4">
    <original>Y</original>
    <variation>H</variation>
    <location>
        <position position="381"/>
    </location>
</feature>
<feature type="mutagenesis site" description="Abolished deubiquitinase activity; impaired ability to mediate deubiquitination of CGAS." evidence="5">
    <original>C</original>
    <variation>A</variation>
    <location>
        <position position="87"/>
    </location>
</feature>
<feature type="mutagenesis site" description="Abolished deubiquitinase activity; impaired ability to mediate deubiquitination of RIGI; when associated with A-380." evidence="6">
    <original>C</original>
    <variation>S</variation>
    <location>
        <position position="87"/>
    </location>
</feature>
<feature type="mutagenesis site" description="Abolished deubiquitinase activity; impaired ability to mediate deubiquitination of RIGI; when associated with S-87." evidence="6">
    <original>H</original>
    <variation>A</variation>
    <location>
        <position position="380"/>
    </location>
</feature>
<feature type="sequence conflict" description="In Ref. 2; DR004246." evidence="8" ref="2">
    <original>E</original>
    <variation>D</variation>
    <location>
        <position position="32"/>
    </location>
</feature>
<feature type="sequence conflict" description="In Ref. 2; DR004246." evidence="8" ref="2">
    <original>E</original>
    <variation>D</variation>
    <location>
        <position position="45"/>
    </location>
</feature>
<keyword id="KW-0963">Cytoplasm</keyword>
<keyword id="KW-0225">Disease variant</keyword>
<keyword id="KW-0378">Hydrolase</keyword>
<keyword id="KW-0391">Immunity</keyword>
<keyword id="KW-0399">Innate immunity</keyword>
<keyword id="KW-0991">Intellectual disability</keyword>
<keyword id="KW-0539">Nucleus</keyword>
<keyword id="KW-0645">Protease</keyword>
<keyword id="KW-1267">Proteomics identification</keyword>
<keyword id="KW-1185">Reference proteome</keyword>
<keyword id="KW-0788">Thiol protease</keyword>
<keyword id="KW-0833">Ubl conjugation pathway</keyword>
<reference key="1">
    <citation type="journal article" date="2005" name="Nature">
        <title>The DNA sequence of the human X chromosome.</title>
        <authorList>
            <person name="Ross M.T."/>
            <person name="Grafham D.V."/>
            <person name="Coffey A.J."/>
            <person name="Scherer S."/>
            <person name="McLay K."/>
            <person name="Muzny D."/>
            <person name="Platzer M."/>
            <person name="Howell G.R."/>
            <person name="Burrows C."/>
            <person name="Bird C.P."/>
            <person name="Frankish A."/>
            <person name="Lovell F.L."/>
            <person name="Howe K.L."/>
            <person name="Ashurst J.L."/>
            <person name="Fulton R.S."/>
            <person name="Sudbrak R."/>
            <person name="Wen G."/>
            <person name="Jones M.C."/>
            <person name="Hurles M.E."/>
            <person name="Andrews T.D."/>
            <person name="Scott C.E."/>
            <person name="Searle S."/>
            <person name="Ramser J."/>
            <person name="Whittaker A."/>
            <person name="Deadman R."/>
            <person name="Carter N.P."/>
            <person name="Hunt S.E."/>
            <person name="Chen R."/>
            <person name="Cree A."/>
            <person name="Gunaratne P."/>
            <person name="Havlak P."/>
            <person name="Hodgson A."/>
            <person name="Metzker M.L."/>
            <person name="Richards S."/>
            <person name="Scott G."/>
            <person name="Steffen D."/>
            <person name="Sodergren E."/>
            <person name="Wheeler D.A."/>
            <person name="Worley K.C."/>
            <person name="Ainscough R."/>
            <person name="Ambrose K.D."/>
            <person name="Ansari-Lari M.A."/>
            <person name="Aradhya S."/>
            <person name="Ashwell R.I."/>
            <person name="Babbage A.K."/>
            <person name="Bagguley C.L."/>
            <person name="Ballabio A."/>
            <person name="Banerjee R."/>
            <person name="Barker G.E."/>
            <person name="Barlow K.F."/>
            <person name="Barrett I.P."/>
            <person name="Bates K.N."/>
            <person name="Beare D.M."/>
            <person name="Beasley H."/>
            <person name="Beasley O."/>
            <person name="Beck A."/>
            <person name="Bethel G."/>
            <person name="Blechschmidt K."/>
            <person name="Brady N."/>
            <person name="Bray-Allen S."/>
            <person name="Bridgeman A.M."/>
            <person name="Brown A.J."/>
            <person name="Brown M.J."/>
            <person name="Bonnin D."/>
            <person name="Bruford E.A."/>
            <person name="Buhay C."/>
            <person name="Burch P."/>
            <person name="Burford D."/>
            <person name="Burgess J."/>
            <person name="Burrill W."/>
            <person name="Burton J."/>
            <person name="Bye J.M."/>
            <person name="Carder C."/>
            <person name="Carrel L."/>
            <person name="Chako J."/>
            <person name="Chapman J.C."/>
            <person name="Chavez D."/>
            <person name="Chen E."/>
            <person name="Chen G."/>
            <person name="Chen Y."/>
            <person name="Chen Z."/>
            <person name="Chinault C."/>
            <person name="Ciccodicola A."/>
            <person name="Clark S.Y."/>
            <person name="Clarke G."/>
            <person name="Clee C.M."/>
            <person name="Clegg S."/>
            <person name="Clerc-Blankenburg K."/>
            <person name="Clifford K."/>
            <person name="Cobley V."/>
            <person name="Cole C.G."/>
            <person name="Conquer J.S."/>
            <person name="Corby N."/>
            <person name="Connor R.E."/>
            <person name="David R."/>
            <person name="Davies J."/>
            <person name="Davis C."/>
            <person name="Davis J."/>
            <person name="Delgado O."/>
            <person name="Deshazo D."/>
            <person name="Dhami P."/>
            <person name="Ding Y."/>
            <person name="Dinh H."/>
            <person name="Dodsworth S."/>
            <person name="Draper H."/>
            <person name="Dugan-Rocha S."/>
            <person name="Dunham A."/>
            <person name="Dunn M."/>
            <person name="Durbin K.J."/>
            <person name="Dutta I."/>
            <person name="Eades T."/>
            <person name="Ellwood M."/>
            <person name="Emery-Cohen A."/>
            <person name="Errington H."/>
            <person name="Evans K.L."/>
            <person name="Faulkner L."/>
            <person name="Francis F."/>
            <person name="Frankland J."/>
            <person name="Fraser A.E."/>
            <person name="Galgoczy P."/>
            <person name="Gilbert J."/>
            <person name="Gill R."/>
            <person name="Gloeckner G."/>
            <person name="Gregory S.G."/>
            <person name="Gribble S."/>
            <person name="Griffiths C."/>
            <person name="Grocock R."/>
            <person name="Gu Y."/>
            <person name="Gwilliam R."/>
            <person name="Hamilton C."/>
            <person name="Hart E.A."/>
            <person name="Hawes A."/>
            <person name="Heath P.D."/>
            <person name="Heitmann K."/>
            <person name="Hennig S."/>
            <person name="Hernandez J."/>
            <person name="Hinzmann B."/>
            <person name="Ho S."/>
            <person name="Hoffs M."/>
            <person name="Howden P.J."/>
            <person name="Huckle E.J."/>
            <person name="Hume J."/>
            <person name="Hunt P.J."/>
            <person name="Hunt A.R."/>
            <person name="Isherwood J."/>
            <person name="Jacob L."/>
            <person name="Johnson D."/>
            <person name="Jones S."/>
            <person name="de Jong P.J."/>
            <person name="Joseph S.S."/>
            <person name="Keenan S."/>
            <person name="Kelly S."/>
            <person name="Kershaw J.K."/>
            <person name="Khan Z."/>
            <person name="Kioschis P."/>
            <person name="Klages S."/>
            <person name="Knights A.J."/>
            <person name="Kosiura A."/>
            <person name="Kovar-Smith C."/>
            <person name="Laird G.K."/>
            <person name="Langford C."/>
            <person name="Lawlor S."/>
            <person name="Leversha M."/>
            <person name="Lewis L."/>
            <person name="Liu W."/>
            <person name="Lloyd C."/>
            <person name="Lloyd D.M."/>
            <person name="Loulseged H."/>
            <person name="Loveland J.E."/>
            <person name="Lovell J.D."/>
            <person name="Lozado R."/>
            <person name="Lu J."/>
            <person name="Lyne R."/>
            <person name="Ma J."/>
            <person name="Maheshwari M."/>
            <person name="Matthews L.H."/>
            <person name="McDowall J."/>
            <person name="McLaren S."/>
            <person name="McMurray A."/>
            <person name="Meidl P."/>
            <person name="Meitinger T."/>
            <person name="Milne S."/>
            <person name="Miner G."/>
            <person name="Mistry S.L."/>
            <person name="Morgan M."/>
            <person name="Morris S."/>
            <person name="Mueller I."/>
            <person name="Mullikin J.C."/>
            <person name="Nguyen N."/>
            <person name="Nordsiek G."/>
            <person name="Nyakatura G."/>
            <person name="O'dell C.N."/>
            <person name="Okwuonu G."/>
            <person name="Palmer S."/>
            <person name="Pandian R."/>
            <person name="Parker D."/>
            <person name="Parrish J."/>
            <person name="Pasternak S."/>
            <person name="Patel D."/>
            <person name="Pearce A.V."/>
            <person name="Pearson D.M."/>
            <person name="Pelan S.E."/>
            <person name="Perez L."/>
            <person name="Porter K.M."/>
            <person name="Ramsey Y."/>
            <person name="Reichwald K."/>
            <person name="Rhodes S."/>
            <person name="Ridler K.A."/>
            <person name="Schlessinger D."/>
            <person name="Schueler M.G."/>
            <person name="Sehra H.K."/>
            <person name="Shaw-Smith C."/>
            <person name="Shen H."/>
            <person name="Sheridan E.M."/>
            <person name="Shownkeen R."/>
            <person name="Skuce C.D."/>
            <person name="Smith M.L."/>
            <person name="Sotheran E.C."/>
            <person name="Steingruber H.E."/>
            <person name="Steward C.A."/>
            <person name="Storey R."/>
            <person name="Swann R.M."/>
            <person name="Swarbreck D."/>
            <person name="Tabor P.E."/>
            <person name="Taudien S."/>
            <person name="Taylor T."/>
            <person name="Teague B."/>
            <person name="Thomas K."/>
            <person name="Thorpe A."/>
            <person name="Timms K."/>
            <person name="Tracey A."/>
            <person name="Trevanion S."/>
            <person name="Tromans A.C."/>
            <person name="d'Urso M."/>
            <person name="Verduzco D."/>
            <person name="Villasana D."/>
            <person name="Waldron L."/>
            <person name="Wall M."/>
            <person name="Wang Q."/>
            <person name="Warren J."/>
            <person name="Warry G.L."/>
            <person name="Wei X."/>
            <person name="West A."/>
            <person name="Whitehead S.L."/>
            <person name="Whiteley M.N."/>
            <person name="Wilkinson J.E."/>
            <person name="Willey D.L."/>
            <person name="Williams G."/>
            <person name="Williams L."/>
            <person name="Williamson A."/>
            <person name="Williamson H."/>
            <person name="Wilming L."/>
            <person name="Woodmansey R.L."/>
            <person name="Wray P.W."/>
            <person name="Yen J."/>
            <person name="Zhang J."/>
            <person name="Zhou J."/>
            <person name="Zoghbi H."/>
            <person name="Zorilla S."/>
            <person name="Buck D."/>
            <person name="Reinhardt R."/>
            <person name="Poustka A."/>
            <person name="Rosenthal A."/>
            <person name="Lehrach H."/>
            <person name="Meindl A."/>
            <person name="Minx P.J."/>
            <person name="Hillier L.W."/>
            <person name="Willard H.F."/>
            <person name="Wilson R.K."/>
            <person name="Waterston R.H."/>
            <person name="Rice C.M."/>
            <person name="Vaudin M."/>
            <person name="Coulson A."/>
            <person name="Nelson D.L."/>
            <person name="Weinstock G."/>
            <person name="Sulston J.E."/>
            <person name="Durbin R.M."/>
            <person name="Hubbard T."/>
            <person name="Gibbs R.A."/>
            <person name="Beck S."/>
            <person name="Rogers J."/>
            <person name="Bentley D.R."/>
        </authorList>
    </citation>
    <scope>NUCLEOTIDE SEQUENCE [LARGE SCALE GENOMIC DNA]</scope>
</reference>
<reference key="2">
    <citation type="submission" date="2005-05" db="EMBL/GenBank/DDBJ databases">
        <title>High-throughput cloning of full-length human cDNAs directly from cDNA libraries optimized for large and rare transcripts.</title>
        <authorList>
            <person name="Birkett C."/>
            <person name="Cho J."/>
            <person name="Gau Y."/>
            <person name="Hamer R."/>
            <person name="Kelly S."/>
            <person name="Kovacs K."/>
            <person name="Liu L."/>
            <person name="Liu X."/>
            <person name="Porter J."/>
            <person name="Sachs A."/>
            <person name="Shu Y."/>
            <person name="Sun Z."/>
            <person name="Wong J."/>
            <person name="Wu M."/>
            <person name="Zhang X."/>
            <person name="Jay G."/>
            <person name="He W."/>
        </authorList>
    </citation>
    <scope>NUCLEOTIDE SEQUENCE [LARGE SCALE MRNA] OF 1-45</scope>
    <source>
        <tissue>Placenta</tissue>
    </source>
</reference>
<reference key="3">
    <citation type="journal article" date="2003" name="Nat. Rev. Genet.">
        <title>Human and mouse proteases: a comparative genomic approach.</title>
        <authorList>
            <person name="Puente X.S."/>
            <person name="Sanchez L.M."/>
            <person name="Overall C.M."/>
            <person name="Lopez-Otin C."/>
        </authorList>
    </citation>
    <scope>IDENTIFICATION</scope>
</reference>
<reference key="4">
    <citation type="journal article" date="2016" name="Mol. Psychiatry">
        <title>X-exome sequencing of 405 unresolved families identifies seven novel intellectual disability genes.</title>
        <authorList>
            <person name="Hu H."/>
            <person name="Haas S.A."/>
            <person name="Chelly J."/>
            <person name="Van Esch H."/>
            <person name="Raynaud M."/>
            <person name="de Brouwer A.P."/>
            <person name="Weinert S."/>
            <person name="Froyen G."/>
            <person name="Frints S.G."/>
            <person name="Laumonnier F."/>
            <person name="Zemojtel T."/>
            <person name="Love M.I."/>
            <person name="Richard H."/>
            <person name="Emde A.K."/>
            <person name="Bienek M."/>
            <person name="Jensen C."/>
            <person name="Hambrock M."/>
            <person name="Fischer U."/>
            <person name="Langnick C."/>
            <person name="Feldkamp M."/>
            <person name="Wissink-Lindhout W."/>
            <person name="Lebrun N."/>
            <person name="Castelnau L."/>
            <person name="Rucci J."/>
            <person name="Montjean R."/>
            <person name="Dorseuil O."/>
            <person name="Billuart P."/>
            <person name="Stuhlmann T."/>
            <person name="Shaw M."/>
            <person name="Corbett M.A."/>
            <person name="Gardner A."/>
            <person name="Willis-Owen S."/>
            <person name="Tan C."/>
            <person name="Friend K.L."/>
            <person name="Belet S."/>
            <person name="van Roozendaal K.E."/>
            <person name="Jimenez-Pocquet M."/>
            <person name="Moizard M.P."/>
            <person name="Ronce N."/>
            <person name="Sun R."/>
            <person name="O'Keeffe S."/>
            <person name="Chenna R."/>
            <person name="van Boemmel A."/>
            <person name="Goeke J."/>
            <person name="Hackett A."/>
            <person name="Field M."/>
            <person name="Christie L."/>
            <person name="Boyle J."/>
            <person name="Haan E."/>
            <person name="Nelson J."/>
            <person name="Turner G."/>
            <person name="Baynam G."/>
            <person name="Gillessen-Kaesbach G."/>
            <person name="Mueller U."/>
            <person name="Steinberger D."/>
            <person name="Budny B."/>
            <person name="Badura-Stronka M."/>
            <person name="Latos-Bielenska A."/>
            <person name="Ousager L.B."/>
            <person name="Wieacker P."/>
            <person name="Rodriguez Criado G."/>
            <person name="Bondeson M.L."/>
            <person name="Anneren G."/>
            <person name="Dufke A."/>
            <person name="Cohen M."/>
            <person name="Van Maldergem L."/>
            <person name="Vincent-Delorme C."/>
            <person name="Echenne B."/>
            <person name="Simon-Bouy B."/>
            <person name="Kleefstra T."/>
            <person name="Willemsen M."/>
            <person name="Fryns J.P."/>
            <person name="Devriendt K."/>
            <person name="Ullmann R."/>
            <person name="Vingron M."/>
            <person name="Wrogemann K."/>
            <person name="Wienker T.F."/>
            <person name="Tzschach A."/>
            <person name="van Bokhoven H."/>
            <person name="Gecz J."/>
            <person name="Jentsch T.J."/>
            <person name="Chen W."/>
            <person name="Ropers H.H."/>
            <person name="Kalscheuer V.M."/>
        </authorList>
    </citation>
    <scope>INVOLVEMENT IN XLID105</scope>
    <scope>VARIANT XLID105 HIS-381</scope>
</reference>
<reference key="5">
    <citation type="journal article" date="2019" name="J. Immunol.">
        <title>USP27X deubiquitinates and stabilizes the DNA sensor cGAS to regulate cytosolic DNA-mediated signaling.</title>
        <authorList>
            <person name="Guo Y."/>
            <person name="Jiang F."/>
            <person name="Kong L."/>
            <person name="Li B."/>
            <person name="Yang Y."/>
            <person name="Zhang L."/>
            <person name="Liu B."/>
            <person name="Zheng Y."/>
            <person name="Gao C."/>
        </authorList>
    </citation>
    <scope>FUNCTION</scope>
    <scope>CATALYTIC ACTIVITY</scope>
    <scope>ACTIVE SITE</scope>
    <scope>MUTAGENESIS OF CYS-87</scope>
</reference>
<reference key="6">
    <citation type="journal article" date="2020" name="PLoS Pathog.">
        <title>USP27X negatively regulates antiviral signaling by deubiquitinating RIG-I.</title>
        <authorList>
            <person name="Tao X."/>
            <person name="Chu B."/>
            <person name="Xin D."/>
            <person name="Li L."/>
            <person name="Sun Q."/>
        </authorList>
    </citation>
    <scope>FUNCTION</scope>
    <scope>CATALYTIC ACTIVITY</scope>
    <scope>ACTIVE SITES</scope>
    <scope>MUTAGENESIS OF CYS-87 AND HIS-380</scope>
</reference>
<dbReference type="EC" id="3.4.19.12" evidence="5 6"/>
<dbReference type="EMBL" id="AF238380">
    <property type="status" value="NOT_ANNOTATED_CDS"/>
    <property type="molecule type" value="Genomic_DNA"/>
</dbReference>
<dbReference type="EMBL" id="DR004246">
    <property type="status" value="NOT_ANNOTATED_CDS"/>
    <property type="molecule type" value="mRNA"/>
</dbReference>
<dbReference type="CCDS" id="CCDS65260.1"/>
<dbReference type="RefSeq" id="NP_001138545.1">
    <property type="nucleotide sequence ID" value="NM_001145073.3"/>
</dbReference>
<dbReference type="SMR" id="A6NNY8"/>
<dbReference type="BioGRID" id="133302">
    <property type="interactions" value="37"/>
</dbReference>
<dbReference type="FunCoup" id="A6NNY8">
    <property type="interactions" value="469"/>
</dbReference>
<dbReference type="IntAct" id="A6NNY8">
    <property type="interactions" value="10"/>
</dbReference>
<dbReference type="MINT" id="A6NNY8"/>
<dbReference type="STRING" id="9606.ENSP00000483631"/>
<dbReference type="BindingDB" id="A6NNY8"/>
<dbReference type="ChEMBL" id="CHEMBL4630801"/>
<dbReference type="MEROPS" id="C19.106"/>
<dbReference type="iPTMnet" id="A6NNY8"/>
<dbReference type="PhosphoSitePlus" id="A6NNY8"/>
<dbReference type="SwissPalm" id="A6NNY8"/>
<dbReference type="BioMuta" id="USP27X"/>
<dbReference type="jPOST" id="A6NNY8"/>
<dbReference type="MassIVE" id="A6NNY8"/>
<dbReference type="PaxDb" id="9606-ENSP00000483631"/>
<dbReference type="PeptideAtlas" id="A6NNY8"/>
<dbReference type="ProteomicsDB" id="1647"/>
<dbReference type="Pumba" id="A6NNY8"/>
<dbReference type="Antibodypedia" id="73225">
    <property type="antibodies" value="68 antibodies from 13 providers"/>
</dbReference>
<dbReference type="DNASU" id="389856"/>
<dbReference type="Ensembl" id="ENST00000621775.2">
    <property type="protein sequence ID" value="ENSP00000483631.1"/>
    <property type="gene ID" value="ENSG00000273820.2"/>
</dbReference>
<dbReference type="GeneID" id="389856"/>
<dbReference type="KEGG" id="hsa:389856"/>
<dbReference type="MANE-Select" id="ENST00000621775.2">
    <property type="protein sequence ID" value="ENSP00000483631.1"/>
    <property type="RefSeq nucleotide sequence ID" value="NM_001145073.3"/>
    <property type="RefSeq protein sequence ID" value="NP_001138545.1"/>
</dbReference>
<dbReference type="UCSC" id="uc033edm.2">
    <property type="organism name" value="human"/>
</dbReference>
<dbReference type="AGR" id="HGNC:13486"/>
<dbReference type="CTD" id="389856"/>
<dbReference type="DisGeNET" id="389856"/>
<dbReference type="GeneCards" id="USP27X"/>
<dbReference type="HGNC" id="HGNC:13486">
    <property type="gene designation" value="USP27X"/>
</dbReference>
<dbReference type="HPA" id="ENSG00000273820">
    <property type="expression patterns" value="Tissue enhanced (brain)"/>
</dbReference>
<dbReference type="MalaCards" id="USP27X"/>
<dbReference type="MIM" id="300975">
    <property type="type" value="gene"/>
</dbReference>
<dbReference type="MIM" id="300984">
    <property type="type" value="phenotype"/>
</dbReference>
<dbReference type="neXtProt" id="NX_A6NNY8"/>
<dbReference type="OpenTargets" id="ENSG00000273820"/>
<dbReference type="Orphanet" id="777">
    <property type="disease" value="X-linked non-syndromic intellectual disability"/>
</dbReference>
<dbReference type="PharmGKB" id="PA134993614"/>
<dbReference type="VEuPathDB" id="HostDB:ENSG00000273820"/>
<dbReference type="eggNOG" id="KOG1867">
    <property type="taxonomic scope" value="Eukaryota"/>
</dbReference>
<dbReference type="GeneTree" id="ENSGT00940000162674"/>
<dbReference type="HOGENOM" id="CLU_008279_11_0_1"/>
<dbReference type="InParanoid" id="A6NNY8"/>
<dbReference type="OMA" id="TEKHIHE"/>
<dbReference type="OrthoDB" id="47475at2759"/>
<dbReference type="PAN-GO" id="A6NNY8">
    <property type="GO annotations" value="0 GO annotations based on evolutionary models"/>
</dbReference>
<dbReference type="PhylomeDB" id="A6NNY8"/>
<dbReference type="PathwayCommons" id="A6NNY8"/>
<dbReference type="SignaLink" id="A6NNY8"/>
<dbReference type="BioGRID-ORCS" id="389856">
    <property type="hits" value="11 hits in 753 CRISPR screens"/>
</dbReference>
<dbReference type="GenomeRNAi" id="389856"/>
<dbReference type="Pharos" id="A6NNY8">
    <property type="development level" value="Tbio"/>
</dbReference>
<dbReference type="PRO" id="PR:A6NNY8"/>
<dbReference type="Proteomes" id="UP000005640">
    <property type="component" value="Chromosome X"/>
</dbReference>
<dbReference type="RNAct" id="A6NNY8">
    <property type="molecule type" value="protein"/>
</dbReference>
<dbReference type="Bgee" id="ENSG00000273820">
    <property type="expression patterns" value="Expressed in buccal mucosa cell and 170 other cell types or tissues"/>
</dbReference>
<dbReference type="GO" id="GO:0005829">
    <property type="term" value="C:cytosol"/>
    <property type="evidence" value="ECO:0007669"/>
    <property type="project" value="UniProtKB-SubCell"/>
</dbReference>
<dbReference type="GO" id="GO:0005634">
    <property type="term" value="C:nucleus"/>
    <property type="evidence" value="ECO:0007669"/>
    <property type="project" value="UniProtKB-SubCell"/>
</dbReference>
<dbReference type="GO" id="GO:0004843">
    <property type="term" value="F:cysteine-type deubiquitinase activity"/>
    <property type="evidence" value="ECO:0000250"/>
    <property type="project" value="UniProtKB"/>
</dbReference>
<dbReference type="GO" id="GO:0004197">
    <property type="term" value="F:cysteine-type endopeptidase activity"/>
    <property type="evidence" value="ECO:0000314"/>
    <property type="project" value="UniProtKB"/>
</dbReference>
<dbReference type="GO" id="GO:1990380">
    <property type="term" value="F:K48-linked deubiquitinase activity"/>
    <property type="evidence" value="ECO:0000250"/>
    <property type="project" value="UniProtKB"/>
</dbReference>
<dbReference type="GO" id="GO:0061578">
    <property type="term" value="F:K63-linked deubiquitinase activity"/>
    <property type="evidence" value="ECO:0000250"/>
    <property type="project" value="UniProtKB"/>
</dbReference>
<dbReference type="GO" id="GO:0051607">
    <property type="term" value="P:defense response to virus"/>
    <property type="evidence" value="ECO:0000315"/>
    <property type="project" value="UniProtKB"/>
</dbReference>
<dbReference type="GO" id="GO:0045087">
    <property type="term" value="P:innate immune response"/>
    <property type="evidence" value="ECO:0007669"/>
    <property type="project" value="UniProtKB-KW"/>
</dbReference>
<dbReference type="GO" id="GO:0043065">
    <property type="term" value="P:positive regulation of apoptotic process"/>
    <property type="evidence" value="ECO:0000250"/>
    <property type="project" value="UniProtKB"/>
</dbReference>
<dbReference type="GO" id="GO:0060340">
    <property type="term" value="P:positive regulation of type I interferon-mediated signaling pathway"/>
    <property type="evidence" value="ECO:0000314"/>
    <property type="project" value="UniProtKB"/>
</dbReference>
<dbReference type="GO" id="GO:0016579">
    <property type="term" value="P:protein deubiquitination"/>
    <property type="evidence" value="ECO:0000250"/>
    <property type="project" value="UniProtKB"/>
</dbReference>
<dbReference type="GO" id="GO:0071108">
    <property type="term" value="P:protein K48-linked deubiquitination"/>
    <property type="evidence" value="ECO:0000314"/>
    <property type="project" value="UniProtKB"/>
</dbReference>
<dbReference type="GO" id="GO:0070536">
    <property type="term" value="P:protein K63-linked deubiquitination"/>
    <property type="evidence" value="ECO:0000250"/>
    <property type="project" value="UniProtKB"/>
</dbReference>
<dbReference type="GO" id="GO:0050821">
    <property type="term" value="P:protein stabilization"/>
    <property type="evidence" value="ECO:0000314"/>
    <property type="project" value="UniProtKB"/>
</dbReference>
<dbReference type="GO" id="GO:0006508">
    <property type="term" value="P:proteolysis"/>
    <property type="evidence" value="ECO:0007669"/>
    <property type="project" value="UniProtKB-KW"/>
</dbReference>
<dbReference type="CDD" id="cd02660">
    <property type="entry name" value="Peptidase_C19D"/>
    <property type="match status" value="1"/>
</dbReference>
<dbReference type="FunFam" id="3.90.70.10:FF:000011">
    <property type="entry name" value="Ubiquitinyl hydrolase 1"/>
    <property type="match status" value="1"/>
</dbReference>
<dbReference type="Gene3D" id="3.90.70.10">
    <property type="entry name" value="Cysteine proteinases"/>
    <property type="match status" value="1"/>
</dbReference>
<dbReference type="InterPro" id="IPR038765">
    <property type="entry name" value="Papain-like_cys_pep_sf"/>
</dbReference>
<dbReference type="InterPro" id="IPR001394">
    <property type="entry name" value="Peptidase_C19_UCH"/>
</dbReference>
<dbReference type="InterPro" id="IPR050185">
    <property type="entry name" value="Ub_carboxyl-term_hydrolase"/>
</dbReference>
<dbReference type="InterPro" id="IPR018200">
    <property type="entry name" value="USP_CS"/>
</dbReference>
<dbReference type="InterPro" id="IPR028889">
    <property type="entry name" value="USP_dom"/>
</dbReference>
<dbReference type="PANTHER" id="PTHR21646">
    <property type="entry name" value="UBIQUITIN CARBOXYL-TERMINAL HYDROLASE"/>
    <property type="match status" value="1"/>
</dbReference>
<dbReference type="PANTHER" id="PTHR21646:SF30">
    <property type="entry name" value="UBIQUITIN CARBOXYL-TERMINAL HYDROLASE 27"/>
    <property type="match status" value="1"/>
</dbReference>
<dbReference type="Pfam" id="PF00443">
    <property type="entry name" value="UCH"/>
    <property type="match status" value="1"/>
</dbReference>
<dbReference type="SUPFAM" id="SSF54001">
    <property type="entry name" value="Cysteine proteinases"/>
    <property type="match status" value="1"/>
</dbReference>
<dbReference type="PROSITE" id="PS00972">
    <property type="entry name" value="USP_1"/>
    <property type="match status" value="1"/>
</dbReference>
<dbReference type="PROSITE" id="PS00973">
    <property type="entry name" value="USP_2"/>
    <property type="match status" value="1"/>
</dbReference>
<dbReference type="PROSITE" id="PS50235">
    <property type="entry name" value="USP_3"/>
    <property type="match status" value="1"/>
</dbReference>
<evidence type="ECO:0000250" key="1">
    <source>
        <dbReference type="UniProtKB" id="Q8CEG8"/>
    </source>
</evidence>
<evidence type="ECO:0000255" key="2">
    <source>
        <dbReference type="PROSITE-ProRule" id="PRU10092"/>
    </source>
</evidence>
<evidence type="ECO:0000255" key="3">
    <source>
        <dbReference type="PROSITE-ProRule" id="PRU10093"/>
    </source>
</evidence>
<evidence type="ECO:0000269" key="4">
    <source>
    </source>
</evidence>
<evidence type="ECO:0000269" key="5">
    <source>
    </source>
</evidence>
<evidence type="ECO:0000269" key="6">
    <source>
    </source>
</evidence>
<evidence type="ECO:0000303" key="7">
    <source>
    </source>
</evidence>
<evidence type="ECO:0000305" key="8"/>
<evidence type="ECO:0000305" key="9">
    <source>
    </source>
</evidence>
<evidence type="ECO:0000305" key="10">
    <source>
    </source>
</evidence>
<evidence type="ECO:0000312" key="11">
    <source>
        <dbReference type="HGNC" id="HGNC:13486"/>
    </source>
</evidence>
<organism>
    <name type="scientific">Homo sapiens</name>
    <name type="common">Human</name>
    <dbReference type="NCBI Taxonomy" id="9606"/>
    <lineage>
        <taxon>Eukaryota</taxon>
        <taxon>Metazoa</taxon>
        <taxon>Chordata</taxon>
        <taxon>Craniata</taxon>
        <taxon>Vertebrata</taxon>
        <taxon>Euteleostomi</taxon>
        <taxon>Mammalia</taxon>
        <taxon>Eutheria</taxon>
        <taxon>Euarchontoglires</taxon>
        <taxon>Primates</taxon>
        <taxon>Haplorrhini</taxon>
        <taxon>Catarrhini</taxon>
        <taxon>Hominidae</taxon>
        <taxon>Homo</taxon>
    </lineage>
</organism>
<sequence>MCKDYVYDKDIEQIAKEEQGEALKLQASTSTEVSHQQCSVPGLGEKFPTWETTKPELELLGHNPRRRRITSSFTIGLRGLINLGNTCFMNCIVQALTHTPILRDFFLSDRHRCEMPSPELCLVCEMSSLFRELYSGNPSPHVPYKLLHLVWIHARHLAGYRQQDAHEFLIAALDVLHRHCKGDDVGKAANNPNHCNCIIDQIFTGGLQSDVTCQACHGVSTTIDPCWDISLDLPGSCTSFWPMSPGRESSVNGESHIPGITTLTDCLRRFTRPEHLGSSAKIKCGSCQSYQESTKQLTMNKLPVVACFHFKRFEHSAKQRRKITTYISFPLELDMTPFMASSKESRMNGQLQLPTNSGNNENKYSLFAVVNHQGTLESGHYTSFIRHHKDQWFKCDDAVITKASIKDVLDSEGYLLFYHKQVLEHESEKVKEMNTQAY</sequence>